<protein>
    <recommendedName>
        <fullName>Hyaluronan mediated motility receptor</fullName>
    </recommendedName>
    <alternativeName>
        <fullName>Intracellular hyaluronic acid-binding protein</fullName>
    </alternativeName>
    <alternativeName>
        <fullName>Receptor for hyaluronan-mediated motility</fullName>
    </alternativeName>
    <cdAntigenName>CD168</cdAntigenName>
</protein>
<feature type="chain" id="PRO_0000084008" description="Hyaluronan mediated motility receptor">
    <location>
        <begin position="1"/>
        <end position="794"/>
    </location>
</feature>
<feature type="repeat" description="1">
    <location>
        <begin position="442"/>
        <end position="462"/>
    </location>
</feature>
<feature type="repeat" description="2">
    <location>
        <begin position="463"/>
        <end position="483"/>
    </location>
</feature>
<feature type="repeat" description="3">
    <location>
        <begin position="484"/>
        <end position="504"/>
    </location>
</feature>
<feature type="repeat" description="4">
    <location>
        <begin position="505"/>
        <end position="525"/>
    </location>
</feature>
<feature type="repeat" description="5">
    <location>
        <begin position="526"/>
        <end position="546"/>
    </location>
</feature>
<feature type="region of interest" description="Disordered" evidence="3">
    <location>
        <begin position="1"/>
        <end position="87"/>
    </location>
</feature>
<feature type="region of interest" description="Required for interaction with FAM83D" evidence="1">
    <location>
        <begin position="365"/>
        <end position="630"/>
    </location>
</feature>
<feature type="region of interest" description="5 X 21 AA tandem repeats">
    <location>
        <begin position="442"/>
        <end position="546"/>
    </location>
</feature>
<feature type="region of interest" description="Hyaluronic acid-binding" evidence="2">
    <location>
        <begin position="719"/>
        <end position="729"/>
    </location>
</feature>
<feature type="region of interest" description="Hyaluronic acid-binding" evidence="2">
    <location>
        <begin position="741"/>
        <end position="750"/>
    </location>
</feature>
<feature type="compositionally biased region" description="Basic and acidic residues" evidence="3">
    <location>
        <begin position="74"/>
        <end position="87"/>
    </location>
</feature>
<feature type="modified residue" description="Phosphoserine" evidence="1">
    <location>
        <position position="20"/>
    </location>
</feature>
<feature type="modified residue" description="Phosphothreonine" evidence="1">
    <location>
        <position position="784"/>
    </location>
</feature>
<feature type="glycosylation site" description="N-linked (GlcNAc...) asparagine" evidence="2">
    <location>
        <position position="134"/>
    </location>
</feature>
<feature type="glycosylation site" description="N-linked (GlcNAc...) asparagine" evidence="2">
    <location>
        <position position="279"/>
    </location>
</feature>
<feature type="glycosylation site" description="N-linked (GlcNAc...) asparagine" evidence="2">
    <location>
        <position position="446"/>
    </location>
</feature>
<feature type="glycosylation site" description="N-linked (GlcNAc...) asparagine" evidence="2">
    <location>
        <position position="467"/>
    </location>
</feature>
<feature type="glycosylation site" description="N-linked (GlcNAc...) asparagine" evidence="2">
    <location>
        <position position="488"/>
    </location>
</feature>
<feature type="glycosylation site" description="N-linked (GlcNAc...) asparagine" evidence="2">
    <location>
        <position position="509"/>
    </location>
</feature>
<feature type="glycosylation site" description="N-linked (GlcNAc...) asparagine" evidence="2">
    <location>
        <position position="530"/>
    </location>
</feature>
<feature type="glycosylation site" description="N-linked (GlcNAc...) asparagine" evidence="2">
    <location>
        <position position="561"/>
    </location>
</feature>
<feature type="glycosylation site" description="N-linked (GlcNAc...) asparagine" evidence="2">
    <location>
        <position position="601"/>
    </location>
</feature>
<feature type="splice variant" id="VSP_004287" description="In isoform RHAMM1." evidence="10">
    <location>
        <begin position="218"/>
        <end position="242"/>
    </location>
</feature>
<feature type="sequence conflict" description="In Ref. 5; CAA06768." evidence="10" ref="5">
    <original>P</original>
    <variation>Q</variation>
    <location>
        <position position="19"/>
    </location>
</feature>
<feature type="sequence conflict" description="In Ref. 1; AAC12655 and 5; CAA06768." evidence="10" ref="1 5">
    <original>N</original>
    <variation>S</variation>
    <location>
        <position position="55"/>
    </location>
</feature>
<feature type="sequence conflict" description="In Ref. 2; AAD08670." evidence="10" ref="2">
    <original>K</original>
    <variation>T</variation>
    <location>
        <position position="71"/>
    </location>
</feature>
<feature type="sequence conflict" description="In Ref. 2; AAD08670." evidence="10" ref="2">
    <original>EKE</original>
    <variation>QKH</variation>
    <location>
        <begin position="89"/>
        <end position="91"/>
    </location>
</feature>
<feature type="sequence conflict" description="In Ref. 5; CAA06768." evidence="10" ref="5">
    <original>A</original>
    <variation>V</variation>
    <location>
        <position position="94"/>
    </location>
</feature>
<feature type="sequence conflict" description="In Ref. 1; AAC12655, 2; AAD08670, 6; CAA45849 and 7; CAA45848." evidence="10" ref="1 2 6 7">
    <original>T</original>
    <variation>R</variation>
    <location>
        <position position="406"/>
    </location>
</feature>
<feature type="sequence conflict" description="In Ref. 1; AAC12655, 6; CAA45849 and 7; CAA45848." evidence="10" ref="1 6 7">
    <original>T</original>
    <variation>S</variation>
    <location>
        <position position="540"/>
    </location>
</feature>
<feature type="sequence conflict" description="In Ref. 2; AAD08670." evidence="10" ref="2">
    <original>E</original>
    <variation>D</variation>
    <location>
        <position position="668"/>
    </location>
</feature>
<sequence>MSFPKAPLKRFNDPSGCAPSPGAYDVKTSEATKGPVSFQKSQRFKNQRESQQNLNIDKDTTLLASAKKAKKSVSKKDSQKNDKDVKRLEKEIRALLQERGTQDKRIQDMESELEKTEAKLNAAVREKTSLSASNASLEKRLTELTRANELLKAKFSEDGHQKNMRALSLELMKLRNKRETKMRSMMVKQEGMELKLQATQKDLTESKGKIVQLEGKLVSIEKEKIDEKCETEKLLEYIQEISCASDQVEKCKVDIAQLEEDLKEKDREILSLKQSLEENITFSKQIEDLTVKCQLLETERDNLVSKDRERAETLSAEMQILTERLALERQEYEKLQQKELQSQSLLQQEKELSARLQQQLCSFQEEMTSEKNVFKEELKLALAELDAVQQKEEQSERLVKQLEEETKSTAEQLTRLDNLLREKEVELEKHIAAHAQAILIAQEKYNDTAQSLRDVTAQLESVQEKYNDTAQSLRDVTAQLESEQEKYNDTAQSLRDVTAQLESEQEKYNDTAQSLRDVTAQLESVQEKYNDTAQSLRDVTAQLESYKSSTLKEIEDLKLENLTLQEKVAMAEKSVEDVQQQILTAESTNQEYARMVQDLQNRSTLKEEEIKEITSSFLEKITDLKNQLRQQDEDFRKQLEEKGKRTAEKENVMTELTMEINKWRLLYEELYEKTKPFQQQLDAFEAEKQALLNEHGATQEQLNKIRDSYAQLLGHQNLKQKIKHVVKLKDENSQLKSEVSKLRSQLVKRKQNELRLQGELDKALGIRHFDPSKAFCHASKENFTPLKEGNPNCC</sequence>
<reference key="1">
    <citation type="journal article" date="1998" name="J. Cell Sci.">
        <title>Identification of IHABP, a 95 kDa intracellular hyaluronate binding protein.</title>
        <authorList>
            <person name="Hofmann M."/>
            <person name="Fieber C."/>
            <person name="Assmann V."/>
            <person name="Goettlicher M."/>
            <person name="Sleeman J."/>
            <person name="Plug R."/>
            <person name="Howells N."/>
            <person name="von Stein O."/>
            <person name="Ponta H."/>
            <person name="Herrlich P."/>
        </authorList>
    </citation>
    <scope>NUCLEOTIDE SEQUENCE [MRNA]</scope>
    <scope>SUBCELLULAR LOCATION</scope>
    <source>
        <tissue>Lung</tissue>
    </source>
</reference>
<reference key="2">
    <citation type="submission" date="1998-07" db="EMBL/GenBank/DDBJ databases">
        <authorList>
            <person name="Zhao Y."/>
            <person name="Zhang S."/>
            <person name="Turley E."/>
        </authorList>
    </citation>
    <scope>NUCLEOTIDE SEQUENCE [MRNA]</scope>
</reference>
<reference key="3">
    <citation type="journal article" date="2009" name="PLoS Biol.">
        <title>Lineage-specific biology revealed by a finished genome assembly of the mouse.</title>
        <authorList>
            <person name="Church D.M."/>
            <person name="Goodstadt L."/>
            <person name="Hillier L.W."/>
            <person name="Zody M.C."/>
            <person name="Goldstein S."/>
            <person name="She X."/>
            <person name="Bult C.J."/>
            <person name="Agarwala R."/>
            <person name="Cherry J.L."/>
            <person name="DiCuccio M."/>
            <person name="Hlavina W."/>
            <person name="Kapustin Y."/>
            <person name="Meric P."/>
            <person name="Maglott D."/>
            <person name="Birtle Z."/>
            <person name="Marques A.C."/>
            <person name="Graves T."/>
            <person name="Zhou S."/>
            <person name="Teague B."/>
            <person name="Potamousis K."/>
            <person name="Churas C."/>
            <person name="Place M."/>
            <person name="Herschleb J."/>
            <person name="Runnheim R."/>
            <person name="Forrest D."/>
            <person name="Amos-Landgraf J."/>
            <person name="Schwartz D.C."/>
            <person name="Cheng Z."/>
            <person name="Lindblad-Toh K."/>
            <person name="Eichler E.E."/>
            <person name="Ponting C.P."/>
        </authorList>
    </citation>
    <scope>NUCLEOTIDE SEQUENCE [LARGE SCALE GENOMIC DNA]</scope>
    <source>
        <strain>C57BL/6J</strain>
    </source>
</reference>
<reference key="4">
    <citation type="submission" date="2005-07" db="EMBL/GenBank/DDBJ databases">
        <authorList>
            <person name="Mural R.J."/>
            <person name="Adams M.D."/>
            <person name="Myers E.W."/>
            <person name="Smith H.O."/>
            <person name="Venter J.C."/>
        </authorList>
    </citation>
    <scope>NUCLEOTIDE SEQUENCE [LARGE SCALE GENOMIC DNA]</scope>
</reference>
<reference key="5">
    <citation type="journal article" date="1999" name="Gene">
        <title>Characterization of the murine gene encoding the intracellular hyaluronan receptor IHABP.</title>
        <authorList>
            <person name="Fieber C."/>
            <person name="Plug R."/>
            <person name="Sleeman J."/>
            <person name="Dall P."/>
            <person name="Ponta H."/>
            <person name="Hofmann M."/>
        </authorList>
    </citation>
    <scope>NUCLEOTIDE SEQUENCE [GENOMIC DNA] OF 1-183</scope>
    <scope>TISSUE SPECIFICITY</scope>
    <source>
        <strain>129/Sv</strain>
    </source>
</reference>
<reference key="6">
    <citation type="journal article" date="1995" name="Gene">
        <title>Characterization of the murine gene encoding the hyaluronan receptor RHAMM.</title>
        <authorList>
            <person name="Entwistle J."/>
            <person name="Zhang S."/>
            <person name="Yang B."/>
            <person name="Wong C."/>
            <person name="Li Q."/>
            <person name="Hall C.L."/>
            <person name="Jingbo A."/>
            <person name="Mowat M."/>
            <person name="Greenberg A.H."/>
            <person name="Turley E.A."/>
        </authorList>
    </citation>
    <scope>NUCLEOTIDE SEQUENCE [MRNA] OF 164-794</scope>
    <scope>ALTERNATIVE SPLICING</scope>
    <source>
        <strain>BALB/cJ</strain>
        <tissue>Fibroblast</tissue>
    </source>
</reference>
<reference key="7">
    <citation type="journal article" date="1992" name="J. Cell Biol.">
        <title>Molecular cloning of a novel hyaluronan receptor that mediates tumor cell motility.</title>
        <authorList>
            <person name="Hardwick C."/>
            <person name="Hoare K."/>
            <person name="Owens R."/>
            <person name="Hohn H.P."/>
            <person name="Hook M."/>
            <person name="Moore D."/>
            <person name="Cripps V."/>
            <person name="Austen L."/>
            <person name="Nance D.M."/>
            <person name="Turley E.A."/>
        </authorList>
    </citation>
    <scope>NUCLEOTIDE SEQUENCE [MRNA] OF 318-794</scope>
    <scope>SUBCELLULAR LOCATION</scope>
    <scope>FUNCTION</scope>
    <source>
        <strain>BALB/cJ</strain>
    </source>
</reference>
<reference key="8">
    <citation type="journal article" date="1992" name="J. Cell Biol.">
        <authorList>
            <person name="Hardwick C."/>
            <person name="Hoare K."/>
            <person name="Owens R."/>
            <person name="Hohn H.P."/>
            <person name="Hook M."/>
            <person name="Moore D."/>
            <person name="Cripps V."/>
            <person name="Austen L."/>
            <person name="Nance D.M."/>
            <person name="Turley E.A."/>
        </authorList>
    </citation>
    <scope>ERRATUM OF PUBMED:1376732</scope>
</reference>
<reference key="9">
    <citation type="journal article" date="1994" name="J. Cell Biol.">
        <title>Hyaluronan and the hyaluronan receptor RHAMM promote focal adhesion turnover and transient tyrosine kinase activity.</title>
        <authorList>
            <person name="Hall C.L."/>
            <person name="Wang C."/>
            <person name="Lange L.A."/>
            <person name="Turley E.A."/>
        </authorList>
    </citation>
    <scope>CHARACTERIZATION</scope>
</reference>
<reference key="10">
    <citation type="journal article" date="1998" name="J. Biol. Chem.">
        <title>The hyaluronan receptor RHAMM regulates extracellular-regulated kinase.</title>
        <authorList>
            <person name="Zhang S."/>
            <person name="Chang M.C."/>
            <person name="Zylka D."/>
            <person name="Turley S."/>
            <person name="Harrison R."/>
            <person name="Turley E.A."/>
        </authorList>
    </citation>
    <scope>ERK REGULATION</scope>
    <scope>SUBCELLULAR LOCATION</scope>
</reference>
<reference key="11">
    <citation type="journal article" date="1998" name="Cell">
        <title>Problems with RHAMM: a new link between surface adhesion and oncogenesis?</title>
        <authorList>
            <person name="Hofmann M."/>
            <person name="Assmann V."/>
            <person name="Fieber C."/>
            <person name="Sleeman J.P."/>
            <person name="Moll J."/>
            <person name="Ponta H."/>
            <person name="Hart I.R."/>
            <person name="Herrlich P."/>
        </authorList>
    </citation>
    <scope>REVIEW</scope>
</reference>
<reference key="12">
    <citation type="journal article" date="2010" name="Cell">
        <title>A tissue-specific atlas of mouse protein phosphorylation and expression.</title>
        <authorList>
            <person name="Huttlin E.L."/>
            <person name="Jedrychowski M.P."/>
            <person name="Elias J.E."/>
            <person name="Goswami T."/>
            <person name="Rad R."/>
            <person name="Beausoleil S.A."/>
            <person name="Villen J."/>
            <person name="Haas W."/>
            <person name="Sowa M.E."/>
            <person name="Gygi S.P."/>
        </authorList>
    </citation>
    <scope>IDENTIFICATION BY MASS SPECTROMETRY [LARGE SCALE ANALYSIS]</scope>
    <source>
        <tissue>Spleen</tissue>
    </source>
</reference>
<reference key="13">
    <citation type="journal article" date="2012" name="PLoS ONE">
        <title>ANKRD26 and its interacting partners TRIO, GPS2, HMMR and DIPA regulate adipogenesis in 3T3-L1 cells.</title>
        <authorList>
            <person name="Liu X.F."/>
            <person name="Bera T.K."/>
            <person name="Kahue C."/>
            <person name="Escobar T."/>
            <person name="Fei Z."/>
            <person name="Raciti G.A."/>
            <person name="Pastan I."/>
        </authorList>
    </citation>
    <scope>FUNCTION</scope>
</reference>
<reference key="14">
    <citation type="journal article" date="2019" name="EMBO Rep.">
        <title>FAM83D directs protein kinase CK1alpha to the mitotic spindle for proper spindle positioning.</title>
        <authorList>
            <person name="Fulcher L.J."/>
            <person name="He Z."/>
            <person name="Mei L."/>
            <person name="Macartney T.J."/>
            <person name="Wood N.T."/>
            <person name="Prescott A.R."/>
            <person name="Whigham A.J."/>
            <person name="Varghese J."/>
            <person name="Gourlay R."/>
            <person name="Ball G."/>
            <person name="Clarke R."/>
            <person name="Campbell D.G."/>
            <person name="Maxwell C.A."/>
            <person name="Sapkota G.P."/>
        </authorList>
    </citation>
    <scope>SUBCELLULAR LOCATION</scope>
</reference>
<dbReference type="EMBL" id="AF031932">
    <property type="protein sequence ID" value="AAC12655.1"/>
    <property type="molecule type" value="mRNA"/>
</dbReference>
<dbReference type="EMBL" id="AF079222">
    <property type="protein sequence ID" value="AAD08670.1"/>
    <property type="molecule type" value="mRNA"/>
</dbReference>
<dbReference type="EMBL" id="AL646055">
    <property type="status" value="NOT_ANNOTATED_CDS"/>
    <property type="molecule type" value="Genomic_DNA"/>
</dbReference>
<dbReference type="EMBL" id="CH466609">
    <property type="protein sequence ID" value="EDL32330.1"/>
    <property type="molecule type" value="Genomic_DNA"/>
</dbReference>
<dbReference type="EMBL" id="AJ005919">
    <property type="protein sequence ID" value="CAA06768.1"/>
    <property type="molecule type" value="Genomic_DNA"/>
</dbReference>
<dbReference type="EMBL" id="AJ005920">
    <property type="protein sequence ID" value="CAA06768.1"/>
    <property type="status" value="JOINED"/>
    <property type="molecule type" value="Genomic_DNA"/>
</dbReference>
<dbReference type="EMBL" id="AJ005921">
    <property type="protein sequence ID" value="CAA06768.1"/>
    <property type="status" value="JOINED"/>
    <property type="molecule type" value="Genomic_DNA"/>
</dbReference>
<dbReference type="EMBL" id="AJ005922">
    <property type="protein sequence ID" value="CAA06768.1"/>
    <property type="status" value="JOINED"/>
    <property type="molecule type" value="Genomic_DNA"/>
</dbReference>
<dbReference type="EMBL" id="AJ005923">
    <property type="protein sequence ID" value="CAA06768.1"/>
    <property type="status" value="JOINED"/>
    <property type="molecule type" value="Genomic_DNA"/>
</dbReference>
<dbReference type="EMBL" id="AJ005924">
    <property type="protein sequence ID" value="CAA06768.1"/>
    <property type="status" value="JOINED"/>
    <property type="molecule type" value="Genomic_DNA"/>
</dbReference>
<dbReference type="EMBL" id="X64550">
    <property type="protein sequence ID" value="CAA45849.1"/>
    <property type="molecule type" value="mRNA"/>
</dbReference>
<dbReference type="EMBL" id="X64550">
    <property type="protein sequence ID" value="CAA45848.1"/>
    <property type="molecule type" value="mRNA"/>
</dbReference>
<dbReference type="CCDS" id="CCDS24548.1">
    <molecule id="Q00547-1"/>
</dbReference>
<dbReference type="PIR" id="JC4298">
    <property type="entry name" value="JC4298"/>
</dbReference>
<dbReference type="RefSeq" id="NP_038580.2">
    <molecule id="Q00547-1"/>
    <property type="nucleotide sequence ID" value="NM_013552.3"/>
</dbReference>
<dbReference type="SMR" id="Q00547"/>
<dbReference type="BioGRID" id="200343">
    <property type="interactions" value="2"/>
</dbReference>
<dbReference type="DIP" id="DIP-46343N"/>
<dbReference type="FunCoup" id="Q00547">
    <property type="interactions" value="761"/>
</dbReference>
<dbReference type="IntAct" id="Q00547">
    <property type="interactions" value="1"/>
</dbReference>
<dbReference type="STRING" id="10090.ENSMUSP00000020579"/>
<dbReference type="GlyCosmos" id="Q00547">
    <property type="glycosylation" value="9 sites, No reported glycans"/>
</dbReference>
<dbReference type="GlyGen" id="Q00547">
    <property type="glycosylation" value="10 sites, 1 O-linked glycan (1 site)"/>
</dbReference>
<dbReference type="iPTMnet" id="Q00547"/>
<dbReference type="PhosphoSitePlus" id="Q00547"/>
<dbReference type="jPOST" id="Q00547"/>
<dbReference type="PaxDb" id="10090-ENSMUSP00000020579"/>
<dbReference type="PeptideAtlas" id="Q00547"/>
<dbReference type="ProteomicsDB" id="267055">
    <molecule id="Q00547-1"/>
</dbReference>
<dbReference type="ProteomicsDB" id="267056">
    <molecule id="Q00547-2"/>
</dbReference>
<dbReference type="Pumba" id="Q00547"/>
<dbReference type="Antibodypedia" id="39622">
    <property type="antibodies" value="463 antibodies from 41 providers"/>
</dbReference>
<dbReference type="DNASU" id="15366"/>
<dbReference type="Ensembl" id="ENSMUST00000020579.9">
    <molecule id="Q00547-1"/>
    <property type="protein sequence ID" value="ENSMUSP00000020579.8"/>
    <property type="gene ID" value="ENSMUSG00000020330.17"/>
</dbReference>
<dbReference type="GeneID" id="15366"/>
<dbReference type="KEGG" id="mmu:15366"/>
<dbReference type="UCSC" id="uc007ils.2">
    <molecule id="Q00547-1"/>
    <property type="organism name" value="mouse"/>
</dbReference>
<dbReference type="AGR" id="MGI:104667"/>
<dbReference type="CTD" id="3161"/>
<dbReference type="MGI" id="MGI:104667">
    <property type="gene designation" value="Hmmr"/>
</dbReference>
<dbReference type="VEuPathDB" id="HostDB:ENSMUSG00000020330"/>
<dbReference type="eggNOG" id="ENOG502QQJM">
    <property type="taxonomic scope" value="Eukaryota"/>
</dbReference>
<dbReference type="GeneTree" id="ENSGT00390000007135"/>
<dbReference type="HOGENOM" id="CLU_009698_0_0_1"/>
<dbReference type="InParanoid" id="Q00547"/>
<dbReference type="OMA" id="NEHIGCA"/>
<dbReference type="OrthoDB" id="419631at2759"/>
<dbReference type="PhylomeDB" id="Q00547"/>
<dbReference type="TreeFam" id="TF333963"/>
<dbReference type="Reactome" id="R-MMU-2160916">
    <property type="pathway name" value="Hyaluronan uptake and degradation"/>
</dbReference>
<dbReference type="Reactome" id="R-MMU-8854518">
    <property type="pathway name" value="AURKA Activation by TPX2"/>
</dbReference>
<dbReference type="BioGRID-ORCS" id="15366">
    <property type="hits" value="8 hits in 78 CRISPR screens"/>
</dbReference>
<dbReference type="ChiTaRS" id="Hmmr">
    <property type="organism name" value="mouse"/>
</dbReference>
<dbReference type="PRO" id="PR:Q00547"/>
<dbReference type="Proteomes" id="UP000000589">
    <property type="component" value="Chromosome 11"/>
</dbReference>
<dbReference type="RNAct" id="Q00547">
    <property type="molecule type" value="protein"/>
</dbReference>
<dbReference type="Bgee" id="ENSMUSG00000020330">
    <property type="expression patterns" value="Expressed in optic fissure and 195 other cell types or tissues"/>
</dbReference>
<dbReference type="GO" id="GO:0009986">
    <property type="term" value="C:cell surface"/>
    <property type="evidence" value="ECO:0007669"/>
    <property type="project" value="UniProtKB-SubCell"/>
</dbReference>
<dbReference type="GO" id="GO:0005813">
    <property type="term" value="C:centrosome"/>
    <property type="evidence" value="ECO:0007669"/>
    <property type="project" value="Ensembl"/>
</dbReference>
<dbReference type="GO" id="GO:0005829">
    <property type="term" value="C:cytosol"/>
    <property type="evidence" value="ECO:0007669"/>
    <property type="project" value="Ensembl"/>
</dbReference>
<dbReference type="GO" id="GO:0005819">
    <property type="term" value="C:spindle"/>
    <property type="evidence" value="ECO:0007669"/>
    <property type="project" value="UniProtKB-SubCell"/>
</dbReference>
<dbReference type="GO" id="GO:0038024">
    <property type="term" value="F:cargo receptor activity"/>
    <property type="evidence" value="ECO:0000314"/>
    <property type="project" value="MGI"/>
</dbReference>
<dbReference type="GO" id="GO:0005540">
    <property type="term" value="F:hyaluronic acid binding"/>
    <property type="evidence" value="ECO:0007669"/>
    <property type="project" value="UniProtKB-KW"/>
</dbReference>
<dbReference type="GO" id="GO:0030214">
    <property type="term" value="P:hyaluronan catabolic process"/>
    <property type="evidence" value="ECO:0000314"/>
    <property type="project" value="MGI"/>
</dbReference>
<dbReference type="GO" id="GO:0006898">
    <property type="term" value="P:receptor-mediated endocytosis"/>
    <property type="evidence" value="ECO:0000314"/>
    <property type="project" value="MGI"/>
</dbReference>
<dbReference type="InterPro" id="IPR031794">
    <property type="entry name" value="HMMR_C"/>
</dbReference>
<dbReference type="InterPro" id="IPR026203">
    <property type="entry name" value="IHABP"/>
</dbReference>
<dbReference type="PANTHER" id="PTHR18956">
    <property type="entry name" value="HYALURONAN MEDIATED MOTILITY RECEPTOR"/>
    <property type="match status" value="1"/>
</dbReference>
<dbReference type="PANTHER" id="PTHR18956:SF6">
    <property type="entry name" value="HYALURONAN MEDIATED MOTILITY RECEPTOR"/>
    <property type="match status" value="1"/>
</dbReference>
<dbReference type="Pfam" id="PF15908">
    <property type="entry name" value="HMMR_C"/>
    <property type="match status" value="1"/>
</dbReference>
<dbReference type="Pfam" id="PF15905">
    <property type="entry name" value="HMMR_N"/>
    <property type="match status" value="1"/>
</dbReference>
<proteinExistence type="evidence at protein level"/>
<name>HMMR_MOUSE</name>
<comment type="function">
    <text evidence="4 5">Receptor for hyaluronic acid (HA) (PubMed:1376732). Involved in cell motility (PubMed:1376732). When hyaluronan binds to HMMR, the phosphorylation of a number of proteins, including the PTK2/FAK1 occurs. May also be involved in cellular transformation and metastasis formation, and in regulating extracellular-regulated kinase (ERK) activity. May act as a regulator of adipogenesis (PubMed:22666460).</text>
</comment>
<comment type="subunit">
    <text evidence="1">Interacts with ANKRD26 (By similarity). Interacts with DYNLL1 (By similarity). Interacts with FAM83D/CHICA (By similarity).</text>
</comment>
<comment type="subcellular location">
    <subcellularLocation>
        <location evidence="4 7">Cell surface</location>
    </subcellularLocation>
    <subcellularLocation>
        <location evidence="7 8">Cytoplasm</location>
    </subcellularLocation>
    <subcellularLocation>
        <location evidence="6">Cytoplasm</location>
        <location evidence="6">Cytoskeleton</location>
        <location evidence="6">Spindle</location>
    </subcellularLocation>
</comment>
<comment type="alternative products">
    <event type="alternative splicing"/>
    <isoform>
        <id>Q00547-1</id>
        <name>RHAMM1V4</name>
        <sequence type="displayed"/>
    </isoform>
    <isoform>
        <id>Q00547-2</id>
        <name>RHAMM1</name>
        <sequence type="described" ref="VSP_004287"/>
    </isoform>
</comment>
<comment type="tissue specificity">
    <text evidence="9">Ubiquitously expressed.</text>
</comment>
<gene>
    <name type="primary">Hmmr</name>
    <name type="synonym">Ihabp</name>
    <name type="synonym">Rhamm</name>
</gene>
<organism>
    <name type="scientific">Mus musculus</name>
    <name type="common">Mouse</name>
    <dbReference type="NCBI Taxonomy" id="10090"/>
    <lineage>
        <taxon>Eukaryota</taxon>
        <taxon>Metazoa</taxon>
        <taxon>Chordata</taxon>
        <taxon>Craniata</taxon>
        <taxon>Vertebrata</taxon>
        <taxon>Euteleostomi</taxon>
        <taxon>Mammalia</taxon>
        <taxon>Eutheria</taxon>
        <taxon>Euarchontoglires</taxon>
        <taxon>Glires</taxon>
        <taxon>Rodentia</taxon>
        <taxon>Myomorpha</taxon>
        <taxon>Muroidea</taxon>
        <taxon>Muridae</taxon>
        <taxon>Murinae</taxon>
        <taxon>Mus</taxon>
        <taxon>Mus</taxon>
    </lineage>
</organism>
<evidence type="ECO:0000250" key="1">
    <source>
        <dbReference type="UniProtKB" id="O75330"/>
    </source>
</evidence>
<evidence type="ECO:0000255" key="2"/>
<evidence type="ECO:0000256" key="3">
    <source>
        <dbReference type="SAM" id="MobiDB-lite"/>
    </source>
</evidence>
<evidence type="ECO:0000269" key="4">
    <source>
    </source>
</evidence>
<evidence type="ECO:0000269" key="5">
    <source>
    </source>
</evidence>
<evidence type="ECO:0000269" key="6">
    <source>
    </source>
</evidence>
<evidence type="ECO:0000269" key="7">
    <source>
    </source>
</evidence>
<evidence type="ECO:0000269" key="8">
    <source>
    </source>
</evidence>
<evidence type="ECO:0000269" key="9">
    <source>
    </source>
</evidence>
<evidence type="ECO:0000305" key="10"/>
<accession>Q00547</accession>
<accession>Q5NC88</accession>
<keyword id="KW-0025">Alternative splicing</keyword>
<keyword id="KW-0963">Cytoplasm</keyword>
<keyword id="KW-0206">Cytoskeleton</keyword>
<keyword id="KW-0325">Glycoprotein</keyword>
<keyword id="KW-0373">Hyaluronic acid</keyword>
<keyword id="KW-0597">Phosphoprotein</keyword>
<keyword id="KW-1185">Reference proteome</keyword>
<keyword id="KW-0677">Repeat</keyword>